<proteinExistence type="predicted"/>
<evidence type="ECO:0000255" key="1">
    <source>
        <dbReference type="PROSITE-ProRule" id="PRU00080"/>
    </source>
</evidence>
<evidence type="ECO:0000256" key="2">
    <source>
        <dbReference type="SAM" id="MobiDB-lite"/>
    </source>
</evidence>
<accession>Q18262</accession>
<gene>
    <name type="ORF">C27F2.7</name>
</gene>
<feature type="chain" id="PRO_0000119980" description="Uncharacterized F-box protein C27F2.7">
    <location>
        <begin position="1"/>
        <end position="408"/>
    </location>
</feature>
<feature type="domain" description="F-box" evidence="1">
    <location>
        <begin position="124"/>
        <end position="170"/>
    </location>
</feature>
<feature type="region of interest" description="Disordered" evidence="2">
    <location>
        <begin position="49"/>
        <end position="77"/>
    </location>
</feature>
<feature type="compositionally biased region" description="Polar residues" evidence="2">
    <location>
        <begin position="62"/>
        <end position="77"/>
    </location>
</feature>
<organism>
    <name type="scientific">Caenorhabditis elegans</name>
    <dbReference type="NCBI Taxonomy" id="6239"/>
    <lineage>
        <taxon>Eukaryota</taxon>
        <taxon>Metazoa</taxon>
        <taxon>Ecdysozoa</taxon>
        <taxon>Nematoda</taxon>
        <taxon>Chromadorea</taxon>
        <taxon>Rhabditida</taxon>
        <taxon>Rhabditina</taxon>
        <taxon>Rhabditomorpha</taxon>
        <taxon>Rhabditoidea</taxon>
        <taxon>Rhabditidae</taxon>
        <taxon>Peloderinae</taxon>
        <taxon>Caenorhabditis</taxon>
    </lineage>
</organism>
<name>YPI7_CAEEL</name>
<protein>
    <recommendedName>
        <fullName>Uncharacterized F-box protein C27F2.7</fullName>
    </recommendedName>
</protein>
<sequence>MAVQQKRRGLSFIDAKASNVKKIAVMASTVAFEFNKATLRLRRSLHISPRSSPEVQRKATAGENSEVGSPESSLSTSRCSKRDRKLCAELSSFALYPIFGALSPSHFSSPNLLFQSEKNSSRRSFEFMQLPDTDICQIMSFLDAQSLLNLSQTCSHLRQLCLAHEDNAGKRDVTSHEITISFNQIHRRTEVRLLKRERTRTDRQFISNNIRGVLAPFSRALTKITFETTVFVTDWLDEILQLHRENRLIPLSLLFTGGALTKGHQVTGADLRSITETEFVDFVTKLQPHLQEVQLSTSRIFKISTDPSQLLGMISMLSSFGIVYERPPLHFYHEEISNAIALWKSDPLSRCCDVYMRRPHDVSSESWIKLAGSIDESRIDPYTDEVLVSQITIKHSFLVHIDLVFHFH</sequence>
<dbReference type="EMBL" id="FO080681">
    <property type="protein sequence ID" value="CCD65744.1"/>
    <property type="molecule type" value="Genomic_DNA"/>
</dbReference>
<dbReference type="RefSeq" id="NP_498056.2">
    <property type="nucleotide sequence ID" value="NM_065655.5"/>
</dbReference>
<dbReference type="BioGRID" id="56801">
    <property type="interactions" value="2"/>
</dbReference>
<dbReference type="FunCoup" id="Q18262">
    <property type="interactions" value="157"/>
</dbReference>
<dbReference type="IntAct" id="Q18262">
    <property type="interactions" value="2"/>
</dbReference>
<dbReference type="STRING" id="6239.C27F2.7.1"/>
<dbReference type="PaxDb" id="6239-C27F2.7"/>
<dbReference type="EnsemblMetazoa" id="C27F2.7.1">
    <property type="protein sequence ID" value="C27F2.7.1"/>
    <property type="gene ID" value="WBGene00016169"/>
</dbReference>
<dbReference type="GeneID" id="259768"/>
<dbReference type="KEGG" id="cel:CELE_C27F2.7"/>
<dbReference type="UCSC" id="C27F2.7">
    <property type="organism name" value="c. elegans"/>
</dbReference>
<dbReference type="AGR" id="WB:WBGene00016169"/>
<dbReference type="CTD" id="259768"/>
<dbReference type="WormBase" id="C27F2.7">
    <property type="protein sequence ID" value="CE38942"/>
    <property type="gene ID" value="WBGene00016169"/>
</dbReference>
<dbReference type="eggNOG" id="KOG2688">
    <property type="taxonomic scope" value="Eukaryota"/>
</dbReference>
<dbReference type="HOGENOM" id="CLU_056237_0_0_1"/>
<dbReference type="InParanoid" id="Q18262"/>
<dbReference type="OMA" id="TVAFEFN"/>
<dbReference type="OrthoDB" id="5815644at2759"/>
<dbReference type="PRO" id="PR:Q18262"/>
<dbReference type="Proteomes" id="UP000001940">
    <property type="component" value="Chromosome III"/>
</dbReference>
<dbReference type="Bgee" id="WBGene00016169">
    <property type="expression patterns" value="Expressed in germ line (C elegans) and 4 other cell types or tissues"/>
</dbReference>
<dbReference type="Gene3D" id="1.20.1280.50">
    <property type="match status" value="1"/>
</dbReference>
<dbReference type="InterPro" id="IPR036047">
    <property type="entry name" value="F-box-like_dom_sf"/>
</dbReference>
<dbReference type="InterPro" id="IPR001810">
    <property type="entry name" value="F-box_dom"/>
</dbReference>
<dbReference type="Pfam" id="PF12937">
    <property type="entry name" value="F-box-like"/>
    <property type="match status" value="1"/>
</dbReference>
<dbReference type="SMART" id="SM00256">
    <property type="entry name" value="FBOX"/>
    <property type="match status" value="1"/>
</dbReference>
<dbReference type="SUPFAM" id="SSF81383">
    <property type="entry name" value="F-box domain"/>
    <property type="match status" value="1"/>
</dbReference>
<dbReference type="PROSITE" id="PS50181">
    <property type="entry name" value="FBOX"/>
    <property type="match status" value="1"/>
</dbReference>
<keyword id="KW-1185">Reference proteome</keyword>
<keyword id="KW-0833">Ubl conjugation pathway</keyword>
<reference key="1">
    <citation type="journal article" date="1998" name="Science">
        <title>Genome sequence of the nematode C. elegans: a platform for investigating biology.</title>
        <authorList>
            <consortium name="The C. elegans sequencing consortium"/>
        </authorList>
    </citation>
    <scope>NUCLEOTIDE SEQUENCE [LARGE SCALE GENOMIC DNA]</scope>
    <source>
        <strain>Bristol N2</strain>
    </source>
</reference>